<comment type="function">
    <text evidence="1">CIPK serine-threonine protein kinases interact with CBL proteins. Binding of a CBL protein to the regulatory NAF domain of CIPK protein lead to the activation of the kinase in a calcium-dependent manner (By similarity).</text>
</comment>
<comment type="catalytic activity">
    <reaction>
        <text>L-seryl-[protein] + ATP = O-phospho-L-seryl-[protein] + ADP + H(+)</text>
        <dbReference type="Rhea" id="RHEA:17989"/>
        <dbReference type="Rhea" id="RHEA-COMP:9863"/>
        <dbReference type="Rhea" id="RHEA-COMP:11604"/>
        <dbReference type="ChEBI" id="CHEBI:15378"/>
        <dbReference type="ChEBI" id="CHEBI:29999"/>
        <dbReference type="ChEBI" id="CHEBI:30616"/>
        <dbReference type="ChEBI" id="CHEBI:83421"/>
        <dbReference type="ChEBI" id="CHEBI:456216"/>
        <dbReference type="EC" id="2.7.11.1"/>
    </reaction>
</comment>
<comment type="catalytic activity">
    <reaction>
        <text>L-threonyl-[protein] + ATP = O-phospho-L-threonyl-[protein] + ADP + H(+)</text>
        <dbReference type="Rhea" id="RHEA:46608"/>
        <dbReference type="Rhea" id="RHEA-COMP:11060"/>
        <dbReference type="Rhea" id="RHEA-COMP:11605"/>
        <dbReference type="ChEBI" id="CHEBI:15378"/>
        <dbReference type="ChEBI" id="CHEBI:30013"/>
        <dbReference type="ChEBI" id="CHEBI:30616"/>
        <dbReference type="ChEBI" id="CHEBI:61977"/>
        <dbReference type="ChEBI" id="CHEBI:456216"/>
        <dbReference type="EC" id="2.7.11.1"/>
    </reaction>
</comment>
<comment type="cofactor">
    <cofactor evidence="1">
        <name>Mn(2+)</name>
        <dbReference type="ChEBI" id="CHEBI:29035"/>
    </cofactor>
</comment>
<comment type="domain">
    <text evidence="1">The activation loop within the kinase domain is the target of phosphorylation/activation by upstream protein kinases. The PPI motif mediates the interaction with the ABI (abscisic acid-insensitive) phosphatases (By similarity).</text>
</comment>
<comment type="similarity">
    <text evidence="6">Belongs to the protein kinase superfamily. CAMK Ser/Thr protein kinase family. SNF1 subfamily.</text>
</comment>
<evidence type="ECO:0000250" key="1"/>
<evidence type="ECO:0000255" key="2">
    <source>
        <dbReference type="PROSITE-ProRule" id="PRU00159"/>
    </source>
</evidence>
<evidence type="ECO:0000255" key="3">
    <source>
        <dbReference type="PROSITE-ProRule" id="PRU00256"/>
    </source>
</evidence>
<evidence type="ECO:0000255" key="4">
    <source>
        <dbReference type="PROSITE-ProRule" id="PRU10027"/>
    </source>
</evidence>
<evidence type="ECO:0000256" key="5">
    <source>
        <dbReference type="SAM" id="MobiDB-lite"/>
    </source>
</evidence>
<evidence type="ECO:0000305" key="6"/>
<dbReference type="EC" id="2.7.11.1"/>
<dbReference type="EMBL" id="AP003608">
    <property type="protein sequence ID" value="BAD53535.1"/>
    <property type="molecule type" value="Genomic_DNA"/>
</dbReference>
<dbReference type="EMBL" id="AP004810">
    <property type="protein sequence ID" value="BAD54299.1"/>
    <property type="molecule type" value="Genomic_DNA"/>
</dbReference>
<dbReference type="EMBL" id="AP008212">
    <property type="protein sequence ID" value="BAF19725.1"/>
    <property type="molecule type" value="Genomic_DNA"/>
</dbReference>
<dbReference type="EMBL" id="AP014962">
    <property type="protein sequence ID" value="BAS98138.1"/>
    <property type="molecule type" value="Genomic_DNA"/>
</dbReference>
<dbReference type="EMBL" id="AK065374">
    <property type="status" value="NOT_ANNOTATED_CDS"/>
    <property type="molecule type" value="mRNA"/>
</dbReference>
<dbReference type="RefSeq" id="XP_015641263.1">
    <property type="nucleotide sequence ID" value="XM_015785777.1"/>
</dbReference>
<dbReference type="SMR" id="Q5Z6X0"/>
<dbReference type="STRING" id="39947.Q5Z6X0"/>
<dbReference type="PaxDb" id="39947-Q5Z6X0"/>
<dbReference type="EnsemblPlants" id="Os06t0543400-01">
    <property type="protein sequence ID" value="Os06t0543400-01"/>
    <property type="gene ID" value="Os06g0543400"/>
</dbReference>
<dbReference type="Gramene" id="Os06t0543400-01">
    <property type="protein sequence ID" value="Os06t0543400-01"/>
    <property type="gene ID" value="Os06g0543400"/>
</dbReference>
<dbReference type="KEGG" id="dosa:Os06g0543400"/>
<dbReference type="eggNOG" id="KOG0583">
    <property type="taxonomic scope" value="Eukaryota"/>
</dbReference>
<dbReference type="HOGENOM" id="CLU_000288_59_0_1"/>
<dbReference type="InParanoid" id="Q5Z6X0"/>
<dbReference type="OMA" id="CGTPMFI"/>
<dbReference type="OrthoDB" id="541276at2759"/>
<dbReference type="Proteomes" id="UP000000763">
    <property type="component" value="Chromosome 6"/>
</dbReference>
<dbReference type="Proteomes" id="UP000059680">
    <property type="component" value="Chromosome 6"/>
</dbReference>
<dbReference type="GO" id="GO:0005524">
    <property type="term" value="F:ATP binding"/>
    <property type="evidence" value="ECO:0007669"/>
    <property type="project" value="UniProtKB-KW"/>
</dbReference>
<dbReference type="GO" id="GO:0106310">
    <property type="term" value="F:protein serine kinase activity"/>
    <property type="evidence" value="ECO:0007669"/>
    <property type="project" value="RHEA"/>
</dbReference>
<dbReference type="GO" id="GO:0004674">
    <property type="term" value="F:protein serine/threonine kinase activity"/>
    <property type="evidence" value="ECO:0000318"/>
    <property type="project" value="GO_Central"/>
</dbReference>
<dbReference type="GO" id="GO:0007165">
    <property type="term" value="P:signal transduction"/>
    <property type="evidence" value="ECO:0000318"/>
    <property type="project" value="GO_Central"/>
</dbReference>
<dbReference type="CDD" id="cd12195">
    <property type="entry name" value="CIPK_C"/>
    <property type="match status" value="1"/>
</dbReference>
<dbReference type="FunFam" id="3.30.200.20:FF:000042">
    <property type="entry name" value="Aurora kinase A"/>
    <property type="match status" value="1"/>
</dbReference>
<dbReference type="FunFam" id="1.10.510.10:FF:000571">
    <property type="entry name" value="Maternal embryonic leucine zipper kinase"/>
    <property type="match status" value="1"/>
</dbReference>
<dbReference type="FunFam" id="3.30.310.80:FF:000005">
    <property type="entry name" value="Non-specific serine/threonine protein kinase"/>
    <property type="match status" value="1"/>
</dbReference>
<dbReference type="Gene3D" id="3.30.310.80">
    <property type="entry name" value="Kinase associated domain 1, KA1"/>
    <property type="match status" value="1"/>
</dbReference>
<dbReference type="Gene3D" id="1.10.510.10">
    <property type="entry name" value="Transferase(Phosphotransferase) domain 1"/>
    <property type="match status" value="1"/>
</dbReference>
<dbReference type="InterPro" id="IPR011009">
    <property type="entry name" value="Kinase-like_dom_sf"/>
</dbReference>
<dbReference type="InterPro" id="IPR018451">
    <property type="entry name" value="NAF/FISL_domain"/>
</dbReference>
<dbReference type="InterPro" id="IPR004041">
    <property type="entry name" value="NAF_dom"/>
</dbReference>
<dbReference type="InterPro" id="IPR000719">
    <property type="entry name" value="Prot_kinase_dom"/>
</dbReference>
<dbReference type="InterPro" id="IPR017441">
    <property type="entry name" value="Protein_kinase_ATP_BS"/>
</dbReference>
<dbReference type="InterPro" id="IPR008271">
    <property type="entry name" value="Ser/Thr_kinase_AS"/>
</dbReference>
<dbReference type="PANTHER" id="PTHR43895">
    <property type="entry name" value="CALCIUM/CALMODULIN-DEPENDENT PROTEIN KINASE KINASE-RELATED"/>
    <property type="match status" value="1"/>
</dbReference>
<dbReference type="PANTHER" id="PTHR43895:SF4">
    <property type="entry name" value="CBL-INTERACTING PROTEIN KINASE 25"/>
    <property type="match status" value="1"/>
</dbReference>
<dbReference type="Pfam" id="PF03822">
    <property type="entry name" value="NAF"/>
    <property type="match status" value="1"/>
</dbReference>
<dbReference type="Pfam" id="PF00069">
    <property type="entry name" value="Pkinase"/>
    <property type="match status" value="1"/>
</dbReference>
<dbReference type="SMART" id="SM00220">
    <property type="entry name" value="S_TKc"/>
    <property type="match status" value="1"/>
</dbReference>
<dbReference type="SUPFAM" id="SSF56112">
    <property type="entry name" value="Protein kinase-like (PK-like)"/>
    <property type="match status" value="1"/>
</dbReference>
<dbReference type="PROSITE" id="PS50816">
    <property type="entry name" value="NAF"/>
    <property type="match status" value="1"/>
</dbReference>
<dbReference type="PROSITE" id="PS00107">
    <property type="entry name" value="PROTEIN_KINASE_ATP"/>
    <property type="match status" value="1"/>
</dbReference>
<dbReference type="PROSITE" id="PS50011">
    <property type="entry name" value="PROTEIN_KINASE_DOM"/>
    <property type="match status" value="1"/>
</dbReference>
<dbReference type="PROSITE" id="PS00108">
    <property type="entry name" value="PROTEIN_KINASE_ST"/>
    <property type="match status" value="1"/>
</dbReference>
<reference key="1">
    <citation type="journal article" date="2005" name="Nature">
        <title>The map-based sequence of the rice genome.</title>
        <authorList>
            <consortium name="International rice genome sequencing project (IRGSP)"/>
        </authorList>
    </citation>
    <scope>NUCLEOTIDE SEQUENCE [LARGE SCALE GENOMIC DNA]</scope>
    <source>
        <strain>cv. Nipponbare</strain>
    </source>
</reference>
<reference key="2">
    <citation type="journal article" date="2008" name="Nucleic Acids Res.">
        <title>The rice annotation project database (RAP-DB): 2008 update.</title>
        <authorList>
            <consortium name="The rice annotation project (RAP)"/>
        </authorList>
    </citation>
    <scope>GENOME REANNOTATION</scope>
    <source>
        <strain>cv. Nipponbare</strain>
    </source>
</reference>
<reference key="3">
    <citation type="journal article" date="2013" name="Rice">
        <title>Improvement of the Oryza sativa Nipponbare reference genome using next generation sequence and optical map data.</title>
        <authorList>
            <person name="Kawahara Y."/>
            <person name="de la Bastide M."/>
            <person name="Hamilton J.P."/>
            <person name="Kanamori H."/>
            <person name="McCombie W.R."/>
            <person name="Ouyang S."/>
            <person name="Schwartz D.C."/>
            <person name="Tanaka T."/>
            <person name="Wu J."/>
            <person name="Zhou S."/>
            <person name="Childs K.L."/>
            <person name="Davidson R.M."/>
            <person name="Lin H."/>
            <person name="Quesada-Ocampo L."/>
            <person name="Vaillancourt B."/>
            <person name="Sakai H."/>
            <person name="Lee S.S."/>
            <person name="Kim J."/>
            <person name="Numa H."/>
            <person name="Itoh T."/>
            <person name="Buell C.R."/>
            <person name="Matsumoto T."/>
        </authorList>
    </citation>
    <scope>GENOME REANNOTATION</scope>
    <source>
        <strain>cv. Nipponbare</strain>
    </source>
</reference>
<reference key="4">
    <citation type="journal article" date="2003" name="Science">
        <title>Collection, mapping, and annotation of over 28,000 cDNA clones from japonica rice.</title>
        <authorList>
            <consortium name="The rice full-length cDNA consortium"/>
        </authorList>
    </citation>
    <scope>NUCLEOTIDE SEQUENCE [LARGE SCALE MRNA]</scope>
    <source>
        <strain>cv. Nipponbare</strain>
    </source>
</reference>
<reference key="5">
    <citation type="journal article" date="2004" name="Plant Physiol.">
        <title>Calcium sensors and their interacting protein kinases: genomics of the Arabidopsis and rice CBL-CIPK signaling networks.</title>
        <authorList>
            <person name="Kolukisaoglu U."/>
            <person name="Weinl S."/>
            <person name="Blazevic D."/>
            <person name="Batistic O."/>
            <person name="Kudla J."/>
        </authorList>
    </citation>
    <scope>GENE FAMILY</scope>
    <scope>NOMENCLATURE</scope>
</reference>
<keyword id="KW-0067">ATP-binding</keyword>
<keyword id="KW-0418">Kinase</keyword>
<keyword id="KW-0464">Manganese</keyword>
<keyword id="KW-0547">Nucleotide-binding</keyword>
<keyword id="KW-1185">Reference proteome</keyword>
<keyword id="KW-0723">Serine/threonine-protein kinase</keyword>
<keyword id="KW-0808">Transferase</keyword>
<protein>
    <recommendedName>
        <fullName>CBL-interacting protein kinase 25</fullName>
        <ecNumber>2.7.11.1</ecNumber>
    </recommendedName>
    <alternativeName>
        <fullName>OsCIPK25</fullName>
    </alternativeName>
</protein>
<name>CIPKP_ORYSJ</name>
<accession>Q5Z6X0</accession>
<accession>A0A0P0WXH2</accession>
<proteinExistence type="evidence at transcript level"/>
<feature type="chain" id="PRO_0000338383" description="CBL-interacting protein kinase 25">
    <location>
        <begin position="1"/>
        <end position="514"/>
    </location>
</feature>
<feature type="domain" description="Protein kinase" evidence="2">
    <location>
        <begin position="21"/>
        <end position="281"/>
    </location>
</feature>
<feature type="domain" description="NAF" evidence="3">
    <location>
        <begin position="323"/>
        <end position="395"/>
    </location>
</feature>
<feature type="region of interest" description="Activation loop" evidence="1">
    <location>
        <begin position="167"/>
        <end position="196"/>
    </location>
</feature>
<feature type="region of interest" description="Disordered" evidence="5">
    <location>
        <begin position="303"/>
        <end position="340"/>
    </location>
</feature>
<feature type="region of interest" description="PPI" evidence="1">
    <location>
        <begin position="398"/>
        <end position="427"/>
    </location>
</feature>
<feature type="compositionally biased region" description="Acidic residues" evidence="5">
    <location>
        <begin position="304"/>
        <end position="317"/>
    </location>
</feature>
<feature type="compositionally biased region" description="Low complexity" evidence="5">
    <location>
        <begin position="318"/>
        <end position="329"/>
    </location>
</feature>
<feature type="active site" description="Proton acceptor" evidence="2 4">
    <location>
        <position position="149"/>
    </location>
</feature>
<feature type="binding site" evidence="2">
    <location>
        <begin position="27"/>
        <end position="35"/>
    </location>
    <ligand>
        <name>ATP</name>
        <dbReference type="ChEBI" id="CHEBI:30616"/>
    </ligand>
</feature>
<feature type="binding site" evidence="2">
    <location>
        <position position="50"/>
    </location>
    <ligand>
        <name>ATP</name>
        <dbReference type="ChEBI" id="CHEBI:30616"/>
    </ligand>
</feature>
<feature type="sequence conflict" description="In Ref. 4; AK065374." evidence="6" ref="4">
    <original>A</original>
    <variation>V</variation>
    <location>
        <position position="89"/>
    </location>
</feature>
<organism>
    <name type="scientific">Oryza sativa subsp. japonica</name>
    <name type="common">Rice</name>
    <dbReference type="NCBI Taxonomy" id="39947"/>
    <lineage>
        <taxon>Eukaryota</taxon>
        <taxon>Viridiplantae</taxon>
        <taxon>Streptophyta</taxon>
        <taxon>Embryophyta</taxon>
        <taxon>Tracheophyta</taxon>
        <taxon>Spermatophyta</taxon>
        <taxon>Magnoliopsida</taxon>
        <taxon>Liliopsida</taxon>
        <taxon>Poales</taxon>
        <taxon>Poaceae</taxon>
        <taxon>BOP clade</taxon>
        <taxon>Oryzoideae</taxon>
        <taxon>Oryzeae</taxon>
        <taxon>Oryzinae</taxon>
        <taxon>Oryza</taxon>
        <taxon>Oryza sativa</taxon>
    </lineage>
</organism>
<gene>
    <name type="primary">CIPK25</name>
    <name type="ordered locus">Os06g0543400</name>
    <name type="ordered locus">LOC_Os06g35160</name>
    <name type="ORF">B1068H08.30</name>
    <name type="ORF">P0007G12.2</name>
</gene>
<sequence length="514" mass="56980">MFRSMGTGTGTKPPAMTTERYEFGPLVGEGNFAKVYLGRHRATGEEVAIKVMDKEKLVRLGATELIKREIAVMQRLRHPNVVRIHEVMANKRRICVVMEYVRGGALYRYFRRGPSGGAAGLREHEARRFFQQLVSAVAYCHSRGVFHRDIKLDNLLVDEQGNLKVADFGLSALADMERREAHLQTVCGTPLFLAPEVFKRRGYDGAKADVWACGVVLYVLLTGRKPFPDEHVSRLYRLIGQNQFQCPPSFSPDLARLVRRLLQPDPDRRITIPEIMEMRWFKRGFKEVTYYIDSNDRLRSLDGLDGEPELYDSDTDTIESSSSSESPTPVAGTPRGMHTSVSAPALSELDRMEDSASLPLPLPLPPRPRMPRPKSLNAFDIIASSPSFDLSGLFEERGERMRFVSGAPVADIIAKLQEIAGMVSFTARTKDCQVSIEATRNGQKGALAISAKVFELTRELVMVQVCKKAGDTAEYRRFCDNELKAGLRGLVVDALPPPVEGGGHGGAAAAAEAE</sequence>